<protein>
    <recommendedName>
        <fullName evidence="1">S-adenosylmethionine synthase</fullName>
        <shortName evidence="1">AdoMet synthase</shortName>
        <ecNumber evidence="1">2.5.1.6</ecNumber>
    </recommendedName>
    <alternativeName>
        <fullName evidence="1">MAT</fullName>
    </alternativeName>
    <alternativeName>
        <fullName evidence="1">Methionine adenosyltransferase</fullName>
    </alternativeName>
</protein>
<name>METK_PORGI</name>
<sequence>MSYLFTSESVSEGHPDKVSDQISDAILDQFLATDPDSKVACETLVTTGQVVLAGEVKSRSYVDVQETARRVIERIGYTKSEYGFDTRSCGIFSSIHEQSADINRGVDRSDRSEQGAGDQGMMFGYATNETENYMPLTVDLAHHLLYELAAIRKEPSSPMPYLRPDAKSQVTIEHDDEGRPVRIDTIVISTQHDEFVQASDGISEAEADRMMQERIHHDIATILIPRVKMLYKPEIAALFDEKVRLFVNPTGKFVIGGPHGDTGLTGRKIIVDTYGGRASHGGGAFSGKDPSKVDRSAAYAARHIAKNMVAAGVADEMLVQVAYAIGVAEPVSIYVNTKGRSHVALSDGQIAEKIKKIFDMRPYAIEQRLKLRNPIYEETAAYGHFGREPYEAYKTFVDEHGTEQMRIVELFTWEKLDYVDKIRAEFGLS</sequence>
<accession>Q7MTQ0</accession>
<dbReference type="EC" id="2.5.1.6" evidence="1"/>
<dbReference type="EMBL" id="AE015924">
    <property type="protein sequence ID" value="AAQ66880.1"/>
    <property type="molecule type" value="Genomic_DNA"/>
</dbReference>
<dbReference type="RefSeq" id="WP_005873988.1">
    <property type="nucleotide sequence ID" value="NC_002950.2"/>
</dbReference>
<dbReference type="SMR" id="Q7MTQ0"/>
<dbReference type="STRING" id="242619.PG_1896"/>
<dbReference type="EnsemblBacteria" id="AAQ66880">
    <property type="protein sequence ID" value="AAQ66880"/>
    <property type="gene ID" value="PG_1896"/>
</dbReference>
<dbReference type="KEGG" id="pgi:PG_1896"/>
<dbReference type="PATRIC" id="fig|242619.8.peg.1750"/>
<dbReference type="eggNOG" id="COG0192">
    <property type="taxonomic scope" value="Bacteria"/>
</dbReference>
<dbReference type="HOGENOM" id="CLU_041802_1_1_10"/>
<dbReference type="BioCyc" id="PGIN242619:G1G02-1767-MONOMER"/>
<dbReference type="UniPathway" id="UPA00315">
    <property type="reaction ID" value="UER00080"/>
</dbReference>
<dbReference type="Proteomes" id="UP000000588">
    <property type="component" value="Chromosome"/>
</dbReference>
<dbReference type="GO" id="GO:0005737">
    <property type="term" value="C:cytoplasm"/>
    <property type="evidence" value="ECO:0007669"/>
    <property type="project" value="UniProtKB-SubCell"/>
</dbReference>
<dbReference type="GO" id="GO:0005524">
    <property type="term" value="F:ATP binding"/>
    <property type="evidence" value="ECO:0007669"/>
    <property type="project" value="UniProtKB-UniRule"/>
</dbReference>
<dbReference type="GO" id="GO:0000287">
    <property type="term" value="F:magnesium ion binding"/>
    <property type="evidence" value="ECO:0007669"/>
    <property type="project" value="UniProtKB-UniRule"/>
</dbReference>
<dbReference type="GO" id="GO:0004478">
    <property type="term" value="F:methionine adenosyltransferase activity"/>
    <property type="evidence" value="ECO:0007669"/>
    <property type="project" value="UniProtKB-UniRule"/>
</dbReference>
<dbReference type="GO" id="GO:0006730">
    <property type="term" value="P:one-carbon metabolic process"/>
    <property type="evidence" value="ECO:0007669"/>
    <property type="project" value="UniProtKB-KW"/>
</dbReference>
<dbReference type="GO" id="GO:0006556">
    <property type="term" value="P:S-adenosylmethionine biosynthetic process"/>
    <property type="evidence" value="ECO:0007669"/>
    <property type="project" value="UniProtKB-UniRule"/>
</dbReference>
<dbReference type="CDD" id="cd18079">
    <property type="entry name" value="S-AdoMet_synt"/>
    <property type="match status" value="1"/>
</dbReference>
<dbReference type="Gene3D" id="3.30.300.10">
    <property type="match status" value="3"/>
</dbReference>
<dbReference type="HAMAP" id="MF_00086">
    <property type="entry name" value="S_AdoMet_synth1"/>
    <property type="match status" value="1"/>
</dbReference>
<dbReference type="InterPro" id="IPR022631">
    <property type="entry name" value="ADOMET_SYNTHASE_CS"/>
</dbReference>
<dbReference type="InterPro" id="IPR022630">
    <property type="entry name" value="S-AdoMet_synt_C"/>
</dbReference>
<dbReference type="InterPro" id="IPR022629">
    <property type="entry name" value="S-AdoMet_synt_central"/>
</dbReference>
<dbReference type="InterPro" id="IPR022628">
    <property type="entry name" value="S-AdoMet_synt_N"/>
</dbReference>
<dbReference type="InterPro" id="IPR002133">
    <property type="entry name" value="S-AdoMet_synthetase"/>
</dbReference>
<dbReference type="InterPro" id="IPR022636">
    <property type="entry name" value="S-AdoMet_synthetase_sfam"/>
</dbReference>
<dbReference type="NCBIfam" id="TIGR01034">
    <property type="entry name" value="metK"/>
    <property type="match status" value="1"/>
</dbReference>
<dbReference type="PANTHER" id="PTHR11964">
    <property type="entry name" value="S-ADENOSYLMETHIONINE SYNTHETASE"/>
    <property type="match status" value="1"/>
</dbReference>
<dbReference type="Pfam" id="PF02773">
    <property type="entry name" value="S-AdoMet_synt_C"/>
    <property type="match status" value="1"/>
</dbReference>
<dbReference type="Pfam" id="PF02772">
    <property type="entry name" value="S-AdoMet_synt_M"/>
    <property type="match status" value="1"/>
</dbReference>
<dbReference type="Pfam" id="PF00438">
    <property type="entry name" value="S-AdoMet_synt_N"/>
    <property type="match status" value="1"/>
</dbReference>
<dbReference type="PIRSF" id="PIRSF000497">
    <property type="entry name" value="MAT"/>
    <property type="match status" value="1"/>
</dbReference>
<dbReference type="SUPFAM" id="SSF55973">
    <property type="entry name" value="S-adenosylmethionine synthetase"/>
    <property type="match status" value="3"/>
</dbReference>
<dbReference type="PROSITE" id="PS00376">
    <property type="entry name" value="ADOMET_SYNTHASE_1"/>
    <property type="match status" value="1"/>
</dbReference>
<dbReference type="PROSITE" id="PS00377">
    <property type="entry name" value="ADOMET_SYNTHASE_2"/>
    <property type="match status" value="1"/>
</dbReference>
<keyword id="KW-0067">ATP-binding</keyword>
<keyword id="KW-0963">Cytoplasm</keyword>
<keyword id="KW-0460">Magnesium</keyword>
<keyword id="KW-0479">Metal-binding</keyword>
<keyword id="KW-0547">Nucleotide-binding</keyword>
<keyword id="KW-0554">One-carbon metabolism</keyword>
<keyword id="KW-0630">Potassium</keyword>
<keyword id="KW-1185">Reference proteome</keyword>
<keyword id="KW-0808">Transferase</keyword>
<evidence type="ECO:0000255" key="1">
    <source>
        <dbReference type="HAMAP-Rule" id="MF_00086"/>
    </source>
</evidence>
<comment type="function">
    <text evidence="1">Catalyzes the formation of S-adenosylmethionine (AdoMet) from methionine and ATP. The overall synthetic reaction is composed of two sequential steps, AdoMet formation and the subsequent tripolyphosphate hydrolysis which occurs prior to release of AdoMet from the enzyme.</text>
</comment>
<comment type="catalytic activity">
    <reaction evidence="1">
        <text>L-methionine + ATP + H2O = S-adenosyl-L-methionine + phosphate + diphosphate</text>
        <dbReference type="Rhea" id="RHEA:21080"/>
        <dbReference type="ChEBI" id="CHEBI:15377"/>
        <dbReference type="ChEBI" id="CHEBI:30616"/>
        <dbReference type="ChEBI" id="CHEBI:33019"/>
        <dbReference type="ChEBI" id="CHEBI:43474"/>
        <dbReference type="ChEBI" id="CHEBI:57844"/>
        <dbReference type="ChEBI" id="CHEBI:59789"/>
        <dbReference type="EC" id="2.5.1.6"/>
    </reaction>
</comment>
<comment type="cofactor">
    <cofactor evidence="1">
        <name>Mg(2+)</name>
        <dbReference type="ChEBI" id="CHEBI:18420"/>
    </cofactor>
    <text evidence="1">Binds 2 divalent ions per subunit.</text>
</comment>
<comment type="cofactor">
    <cofactor evidence="1">
        <name>K(+)</name>
        <dbReference type="ChEBI" id="CHEBI:29103"/>
    </cofactor>
    <text evidence="1">Binds 1 potassium ion per subunit.</text>
</comment>
<comment type="pathway">
    <text evidence="1">Amino-acid biosynthesis; S-adenosyl-L-methionine biosynthesis; S-adenosyl-L-methionine from L-methionine: step 1/1.</text>
</comment>
<comment type="subunit">
    <text evidence="1">Homotetramer; dimer of dimers.</text>
</comment>
<comment type="subcellular location">
    <subcellularLocation>
        <location evidence="1">Cytoplasm</location>
    </subcellularLocation>
</comment>
<comment type="similarity">
    <text evidence="1">Belongs to the AdoMet synthase family.</text>
</comment>
<reference key="1">
    <citation type="journal article" date="2003" name="J. Bacteriol.">
        <title>Complete genome sequence of the oral pathogenic bacterium Porphyromonas gingivalis strain W83.</title>
        <authorList>
            <person name="Nelson K.E."/>
            <person name="Fleischmann R.D."/>
            <person name="DeBoy R.T."/>
            <person name="Paulsen I.T."/>
            <person name="Fouts D.E."/>
            <person name="Eisen J.A."/>
            <person name="Daugherty S.C."/>
            <person name="Dodson R.J."/>
            <person name="Durkin A.S."/>
            <person name="Gwinn M.L."/>
            <person name="Haft D.H."/>
            <person name="Kolonay J.F."/>
            <person name="Nelson W.C."/>
            <person name="Mason T.M."/>
            <person name="Tallon L."/>
            <person name="Gray J."/>
            <person name="Granger D."/>
            <person name="Tettelin H."/>
            <person name="Dong H."/>
            <person name="Galvin J.L."/>
            <person name="Duncan M.J."/>
            <person name="Dewhirst F.E."/>
            <person name="Fraser C.M."/>
        </authorList>
    </citation>
    <scope>NUCLEOTIDE SEQUENCE [LARGE SCALE GENOMIC DNA]</scope>
    <source>
        <strain>ATCC BAA-308 / W83</strain>
    </source>
</reference>
<proteinExistence type="inferred from homology"/>
<feature type="chain" id="PRO_0000174567" description="S-adenosylmethionine synthase">
    <location>
        <begin position="1"/>
        <end position="429"/>
    </location>
</feature>
<feature type="region of interest" description="Flexible loop" evidence="1">
    <location>
        <begin position="98"/>
        <end position="108"/>
    </location>
</feature>
<feature type="binding site" description="in other chain" evidence="1">
    <location>
        <position position="14"/>
    </location>
    <ligand>
        <name>ATP</name>
        <dbReference type="ChEBI" id="CHEBI:30616"/>
        <note>ligand shared between two neighboring subunits</note>
    </ligand>
</feature>
<feature type="binding site" evidence="1">
    <location>
        <position position="16"/>
    </location>
    <ligand>
        <name>Mg(2+)</name>
        <dbReference type="ChEBI" id="CHEBI:18420"/>
    </ligand>
</feature>
<feature type="binding site" evidence="1">
    <location>
        <position position="42"/>
    </location>
    <ligand>
        <name>K(+)</name>
        <dbReference type="ChEBI" id="CHEBI:29103"/>
    </ligand>
</feature>
<feature type="binding site" description="in other chain" evidence="1">
    <location>
        <position position="55"/>
    </location>
    <ligand>
        <name>L-methionine</name>
        <dbReference type="ChEBI" id="CHEBI:57844"/>
        <note>ligand shared between two neighboring subunits</note>
    </ligand>
</feature>
<feature type="binding site" description="in other chain" evidence="1">
    <location>
        <position position="98"/>
    </location>
    <ligand>
        <name>L-methionine</name>
        <dbReference type="ChEBI" id="CHEBI:57844"/>
        <note>ligand shared between two neighboring subunits</note>
    </ligand>
</feature>
<feature type="binding site" description="in other chain" evidence="1">
    <location>
        <begin position="165"/>
        <end position="167"/>
    </location>
    <ligand>
        <name>ATP</name>
        <dbReference type="ChEBI" id="CHEBI:30616"/>
        <note>ligand shared between two neighboring subunits</note>
    </ligand>
</feature>
<feature type="binding site" description="in other chain" evidence="1">
    <location>
        <begin position="252"/>
        <end position="253"/>
    </location>
    <ligand>
        <name>ATP</name>
        <dbReference type="ChEBI" id="CHEBI:30616"/>
        <note>ligand shared between two neighboring subunits</note>
    </ligand>
</feature>
<feature type="binding site" evidence="1">
    <location>
        <position position="261"/>
    </location>
    <ligand>
        <name>ATP</name>
        <dbReference type="ChEBI" id="CHEBI:30616"/>
        <note>ligand shared between two neighboring subunits</note>
    </ligand>
</feature>
<feature type="binding site" evidence="1">
    <location>
        <position position="261"/>
    </location>
    <ligand>
        <name>L-methionine</name>
        <dbReference type="ChEBI" id="CHEBI:57844"/>
        <note>ligand shared between two neighboring subunits</note>
    </ligand>
</feature>
<feature type="binding site" description="in other chain" evidence="1">
    <location>
        <begin position="267"/>
        <end position="268"/>
    </location>
    <ligand>
        <name>ATP</name>
        <dbReference type="ChEBI" id="CHEBI:30616"/>
        <note>ligand shared between two neighboring subunits</note>
    </ligand>
</feature>
<feature type="binding site" evidence="1">
    <location>
        <position position="284"/>
    </location>
    <ligand>
        <name>ATP</name>
        <dbReference type="ChEBI" id="CHEBI:30616"/>
        <note>ligand shared between two neighboring subunits</note>
    </ligand>
</feature>
<feature type="binding site" evidence="1">
    <location>
        <position position="288"/>
    </location>
    <ligand>
        <name>ATP</name>
        <dbReference type="ChEBI" id="CHEBI:30616"/>
        <note>ligand shared between two neighboring subunits</note>
    </ligand>
</feature>
<feature type="binding site" description="in other chain" evidence="1">
    <location>
        <position position="292"/>
    </location>
    <ligand>
        <name>L-methionine</name>
        <dbReference type="ChEBI" id="CHEBI:57844"/>
        <note>ligand shared between two neighboring subunits</note>
    </ligand>
</feature>
<organism>
    <name type="scientific">Porphyromonas gingivalis (strain ATCC BAA-308 / W83)</name>
    <dbReference type="NCBI Taxonomy" id="242619"/>
    <lineage>
        <taxon>Bacteria</taxon>
        <taxon>Pseudomonadati</taxon>
        <taxon>Bacteroidota</taxon>
        <taxon>Bacteroidia</taxon>
        <taxon>Bacteroidales</taxon>
        <taxon>Porphyromonadaceae</taxon>
        <taxon>Porphyromonas</taxon>
    </lineage>
</organism>
<gene>
    <name evidence="1" type="primary">metK</name>
    <name type="ordered locus">PG_1896</name>
</gene>